<sequence length="286" mass="31991">MMKQKTIAKEFSVTGVGLHSGVDVSMTVKPADIDSGIVFRRADLTPVVDIKVTPSSIKEAIMCTLLTKDGDQNLSVSTIEHLMSAFAMFEVDNVLIEVNAPELPVMDGSSYEFTQLLKQVGIVEQNSARKGIKILKPVRVEHEDKFAEVLPSDTLKYEFKIHWDHPVIAATNDHIVFEYDLDEYIKMVSKARTFGFYEQLAYLHQNNLAKGASLDNAVGVTNEGVLNEGGLRYDDEFVRHKLLDAIGDFYVGGYILGHFNCFKSGHTLNNKLLHAVFADKDAWEYI</sequence>
<comment type="function">
    <text evidence="1">Catalyzes the hydrolysis of UDP-3-O-myristoyl-N-acetylglucosamine to form UDP-3-O-myristoylglucosamine and acetate, the committed step in lipid A biosynthesis.</text>
</comment>
<comment type="catalytic activity">
    <reaction evidence="1">
        <text>a UDP-3-O-[(3R)-3-hydroxyacyl]-N-acetyl-alpha-D-glucosamine + H2O = a UDP-3-O-[(3R)-3-hydroxyacyl]-alpha-D-glucosamine + acetate</text>
        <dbReference type="Rhea" id="RHEA:67816"/>
        <dbReference type="ChEBI" id="CHEBI:15377"/>
        <dbReference type="ChEBI" id="CHEBI:30089"/>
        <dbReference type="ChEBI" id="CHEBI:137740"/>
        <dbReference type="ChEBI" id="CHEBI:173225"/>
        <dbReference type="EC" id="3.5.1.108"/>
    </reaction>
</comment>
<comment type="cofactor">
    <cofactor evidence="1">
        <name>Zn(2+)</name>
        <dbReference type="ChEBI" id="CHEBI:29105"/>
    </cofactor>
</comment>
<comment type="pathway">
    <text evidence="1">Glycolipid biosynthesis; lipid IV(A) biosynthesis; lipid IV(A) from (3R)-3-hydroxytetradecanoyl-[acyl-carrier-protein] and UDP-N-acetyl-alpha-D-glucosamine: step 2/6.</text>
</comment>
<comment type="similarity">
    <text evidence="1">Belongs to the LpxC family.</text>
</comment>
<organism>
    <name type="scientific">Francisella tularensis subsp. tularensis (strain FSC 198)</name>
    <dbReference type="NCBI Taxonomy" id="393115"/>
    <lineage>
        <taxon>Bacteria</taxon>
        <taxon>Pseudomonadati</taxon>
        <taxon>Pseudomonadota</taxon>
        <taxon>Gammaproteobacteria</taxon>
        <taxon>Thiotrichales</taxon>
        <taxon>Francisellaceae</taxon>
        <taxon>Francisella</taxon>
    </lineage>
</organism>
<evidence type="ECO:0000255" key="1">
    <source>
        <dbReference type="HAMAP-Rule" id="MF_00388"/>
    </source>
</evidence>
<gene>
    <name evidence="1" type="primary">lpxC</name>
    <name type="ordered locus">FTF0189</name>
</gene>
<name>LPXC_FRAT1</name>
<dbReference type="EC" id="3.5.1.108" evidence="1"/>
<dbReference type="EMBL" id="AM286280">
    <property type="protein sequence ID" value="CAL08205.1"/>
    <property type="molecule type" value="Genomic_DNA"/>
</dbReference>
<dbReference type="RefSeq" id="WP_003017478.1">
    <property type="nucleotide sequence ID" value="NC_008245.1"/>
</dbReference>
<dbReference type="SMR" id="Q14JP5"/>
<dbReference type="KEGG" id="ftf:FTF0189"/>
<dbReference type="HOGENOM" id="CLU_046528_1_0_6"/>
<dbReference type="UniPathway" id="UPA00359">
    <property type="reaction ID" value="UER00478"/>
</dbReference>
<dbReference type="GO" id="GO:0016020">
    <property type="term" value="C:membrane"/>
    <property type="evidence" value="ECO:0007669"/>
    <property type="project" value="GOC"/>
</dbReference>
<dbReference type="GO" id="GO:0046872">
    <property type="term" value="F:metal ion binding"/>
    <property type="evidence" value="ECO:0007669"/>
    <property type="project" value="UniProtKB-KW"/>
</dbReference>
<dbReference type="GO" id="GO:0103117">
    <property type="term" value="F:UDP-3-O-acyl-N-acetylglucosamine deacetylase activity"/>
    <property type="evidence" value="ECO:0007669"/>
    <property type="project" value="UniProtKB-UniRule"/>
</dbReference>
<dbReference type="GO" id="GO:0009245">
    <property type="term" value="P:lipid A biosynthetic process"/>
    <property type="evidence" value="ECO:0007669"/>
    <property type="project" value="UniProtKB-UniRule"/>
</dbReference>
<dbReference type="Gene3D" id="3.30.230.20">
    <property type="entry name" value="lpxc deacetylase, domain 1"/>
    <property type="match status" value="1"/>
</dbReference>
<dbReference type="Gene3D" id="3.30.1700.10">
    <property type="entry name" value="lpxc deacetylase, domain 2"/>
    <property type="match status" value="1"/>
</dbReference>
<dbReference type="HAMAP" id="MF_00388">
    <property type="entry name" value="LpxC"/>
    <property type="match status" value="1"/>
</dbReference>
<dbReference type="InterPro" id="IPR020568">
    <property type="entry name" value="Ribosomal_Su5_D2-typ_SF"/>
</dbReference>
<dbReference type="InterPro" id="IPR004463">
    <property type="entry name" value="UDP-acyl_GlcNac_deAcase"/>
</dbReference>
<dbReference type="InterPro" id="IPR011334">
    <property type="entry name" value="UDP-acyl_GlcNac_deAcase_C"/>
</dbReference>
<dbReference type="InterPro" id="IPR015870">
    <property type="entry name" value="UDP-acyl_N-AcGlcN_deAcase_N"/>
</dbReference>
<dbReference type="NCBIfam" id="TIGR00325">
    <property type="entry name" value="lpxC"/>
    <property type="match status" value="1"/>
</dbReference>
<dbReference type="PANTHER" id="PTHR33694">
    <property type="entry name" value="UDP-3-O-ACYL-N-ACETYLGLUCOSAMINE DEACETYLASE 1, MITOCHONDRIAL-RELATED"/>
    <property type="match status" value="1"/>
</dbReference>
<dbReference type="PANTHER" id="PTHR33694:SF1">
    <property type="entry name" value="UDP-3-O-ACYL-N-ACETYLGLUCOSAMINE DEACETYLASE 1, MITOCHONDRIAL-RELATED"/>
    <property type="match status" value="1"/>
</dbReference>
<dbReference type="Pfam" id="PF03331">
    <property type="entry name" value="LpxC"/>
    <property type="match status" value="1"/>
</dbReference>
<dbReference type="SUPFAM" id="SSF54211">
    <property type="entry name" value="Ribosomal protein S5 domain 2-like"/>
    <property type="match status" value="2"/>
</dbReference>
<reference key="1">
    <citation type="journal article" date="2007" name="PLoS ONE">
        <title>Genome sequencing shows that European isolates of Francisella tularensis subspecies tularensis are almost identical to US laboratory strain Schu S4.</title>
        <authorList>
            <person name="Chaudhuri R.R."/>
            <person name="Ren C.-P."/>
            <person name="Desmond L."/>
            <person name="Vincent G.A."/>
            <person name="Silman N.J."/>
            <person name="Brehm J.K."/>
            <person name="Elmore M.J."/>
            <person name="Hudson M.J."/>
            <person name="Forsman M."/>
            <person name="Isherwood K.E."/>
            <person name="Gurycova D."/>
            <person name="Minton N.P."/>
            <person name="Titball R.W."/>
            <person name="Pallen M.J."/>
            <person name="Vipond R."/>
        </authorList>
    </citation>
    <scope>NUCLEOTIDE SEQUENCE [LARGE SCALE GENOMIC DNA]</scope>
    <source>
        <strain>FSC 198</strain>
    </source>
</reference>
<feature type="chain" id="PRO_1000122789" description="UDP-3-O-acyl-N-acetylglucosamine deacetylase">
    <location>
        <begin position="1"/>
        <end position="286"/>
    </location>
</feature>
<feature type="active site" description="Proton donor" evidence="1">
    <location>
        <position position="266"/>
    </location>
</feature>
<feature type="binding site" evidence="1">
    <location>
        <position position="81"/>
    </location>
    <ligand>
        <name>Zn(2+)</name>
        <dbReference type="ChEBI" id="CHEBI:29105"/>
    </ligand>
</feature>
<feature type="binding site" evidence="1">
    <location>
        <position position="240"/>
    </location>
    <ligand>
        <name>Zn(2+)</name>
        <dbReference type="ChEBI" id="CHEBI:29105"/>
    </ligand>
</feature>
<feature type="binding site" evidence="1">
    <location>
        <position position="244"/>
    </location>
    <ligand>
        <name>Zn(2+)</name>
        <dbReference type="ChEBI" id="CHEBI:29105"/>
    </ligand>
</feature>
<proteinExistence type="inferred from homology"/>
<accession>Q14JP5</accession>
<protein>
    <recommendedName>
        <fullName evidence="1">UDP-3-O-acyl-N-acetylglucosamine deacetylase</fullName>
        <shortName evidence="1">UDP-3-O-acyl-GlcNAc deacetylase</shortName>
        <ecNumber evidence="1">3.5.1.108</ecNumber>
    </recommendedName>
    <alternativeName>
        <fullName evidence="1">UDP-3-O-[R-3-hydroxymyristoyl]-N-acetylglucosamine deacetylase</fullName>
    </alternativeName>
</protein>
<keyword id="KW-0378">Hydrolase</keyword>
<keyword id="KW-0441">Lipid A biosynthesis</keyword>
<keyword id="KW-0444">Lipid biosynthesis</keyword>
<keyword id="KW-0443">Lipid metabolism</keyword>
<keyword id="KW-0479">Metal-binding</keyword>
<keyword id="KW-0862">Zinc</keyword>